<reference key="1">
    <citation type="journal article" date="1999" name="J. Cell Biol.">
        <title>Cloning and characterization of a potassium-dependent sodium/calcium exchanger in Drosophila.</title>
        <authorList>
            <person name="Haug-Collet K."/>
            <person name="Pearson B."/>
            <person name="Webel R."/>
            <person name="Szerencsei R.T."/>
            <person name="Winkfein R.J."/>
            <person name="Schnetkamp P.P.M."/>
            <person name="Colley N.J."/>
        </authorList>
    </citation>
    <scope>NUCLEOTIDE SEQUENCE [MRNA] (ISOFORM A)</scope>
    <scope>FUNCTION</scope>
    <scope>TISSUE SPECIFICITY</scope>
    <scope>DEVELOPMENTAL STAGE</scope>
    <scope>RNA EDITING OF POSITION 365</scope>
</reference>
<reference key="2">
    <citation type="journal article" date="2000" name="Science">
        <title>The genome sequence of Drosophila melanogaster.</title>
        <authorList>
            <person name="Adams M.D."/>
            <person name="Celniker S.E."/>
            <person name="Holt R.A."/>
            <person name="Evans C.A."/>
            <person name="Gocayne J.D."/>
            <person name="Amanatides P.G."/>
            <person name="Scherer S.E."/>
            <person name="Li P.W."/>
            <person name="Hoskins R.A."/>
            <person name="Galle R.F."/>
            <person name="George R.A."/>
            <person name="Lewis S.E."/>
            <person name="Richards S."/>
            <person name="Ashburner M."/>
            <person name="Henderson S.N."/>
            <person name="Sutton G.G."/>
            <person name="Wortman J.R."/>
            <person name="Yandell M.D."/>
            <person name="Zhang Q."/>
            <person name="Chen L.X."/>
            <person name="Brandon R.C."/>
            <person name="Rogers Y.-H.C."/>
            <person name="Blazej R.G."/>
            <person name="Champe M."/>
            <person name="Pfeiffer B.D."/>
            <person name="Wan K.H."/>
            <person name="Doyle C."/>
            <person name="Baxter E.G."/>
            <person name="Helt G."/>
            <person name="Nelson C.R."/>
            <person name="Miklos G.L.G."/>
            <person name="Abril J.F."/>
            <person name="Agbayani A."/>
            <person name="An H.-J."/>
            <person name="Andrews-Pfannkoch C."/>
            <person name="Baldwin D."/>
            <person name="Ballew R.M."/>
            <person name="Basu A."/>
            <person name="Baxendale J."/>
            <person name="Bayraktaroglu L."/>
            <person name="Beasley E.M."/>
            <person name="Beeson K.Y."/>
            <person name="Benos P.V."/>
            <person name="Berman B.P."/>
            <person name="Bhandari D."/>
            <person name="Bolshakov S."/>
            <person name="Borkova D."/>
            <person name="Botchan M.R."/>
            <person name="Bouck J."/>
            <person name="Brokstein P."/>
            <person name="Brottier P."/>
            <person name="Burtis K.C."/>
            <person name="Busam D.A."/>
            <person name="Butler H."/>
            <person name="Cadieu E."/>
            <person name="Center A."/>
            <person name="Chandra I."/>
            <person name="Cherry J.M."/>
            <person name="Cawley S."/>
            <person name="Dahlke C."/>
            <person name="Davenport L.B."/>
            <person name="Davies P."/>
            <person name="de Pablos B."/>
            <person name="Delcher A."/>
            <person name="Deng Z."/>
            <person name="Mays A.D."/>
            <person name="Dew I."/>
            <person name="Dietz S.M."/>
            <person name="Dodson K."/>
            <person name="Doup L.E."/>
            <person name="Downes M."/>
            <person name="Dugan-Rocha S."/>
            <person name="Dunkov B.C."/>
            <person name="Dunn P."/>
            <person name="Durbin K.J."/>
            <person name="Evangelista C.C."/>
            <person name="Ferraz C."/>
            <person name="Ferriera S."/>
            <person name="Fleischmann W."/>
            <person name="Fosler C."/>
            <person name="Gabrielian A.E."/>
            <person name="Garg N.S."/>
            <person name="Gelbart W.M."/>
            <person name="Glasser K."/>
            <person name="Glodek A."/>
            <person name="Gong F."/>
            <person name="Gorrell J.H."/>
            <person name="Gu Z."/>
            <person name="Guan P."/>
            <person name="Harris M."/>
            <person name="Harris N.L."/>
            <person name="Harvey D.A."/>
            <person name="Heiman T.J."/>
            <person name="Hernandez J.R."/>
            <person name="Houck J."/>
            <person name="Hostin D."/>
            <person name="Houston K.A."/>
            <person name="Howland T.J."/>
            <person name="Wei M.-H."/>
            <person name="Ibegwam C."/>
            <person name="Jalali M."/>
            <person name="Kalush F."/>
            <person name="Karpen G.H."/>
            <person name="Ke Z."/>
            <person name="Kennison J.A."/>
            <person name="Ketchum K.A."/>
            <person name="Kimmel B.E."/>
            <person name="Kodira C.D."/>
            <person name="Kraft C.L."/>
            <person name="Kravitz S."/>
            <person name="Kulp D."/>
            <person name="Lai Z."/>
            <person name="Lasko P."/>
            <person name="Lei Y."/>
            <person name="Levitsky A.A."/>
            <person name="Li J.H."/>
            <person name="Li Z."/>
            <person name="Liang Y."/>
            <person name="Lin X."/>
            <person name="Liu X."/>
            <person name="Mattei B."/>
            <person name="McIntosh T.C."/>
            <person name="McLeod M.P."/>
            <person name="McPherson D."/>
            <person name="Merkulov G."/>
            <person name="Milshina N.V."/>
            <person name="Mobarry C."/>
            <person name="Morris J."/>
            <person name="Moshrefi A."/>
            <person name="Mount S.M."/>
            <person name="Moy M."/>
            <person name="Murphy B."/>
            <person name="Murphy L."/>
            <person name="Muzny D.M."/>
            <person name="Nelson D.L."/>
            <person name="Nelson D.R."/>
            <person name="Nelson K.A."/>
            <person name="Nixon K."/>
            <person name="Nusskern D.R."/>
            <person name="Pacleb J.M."/>
            <person name="Palazzolo M."/>
            <person name="Pittman G.S."/>
            <person name="Pan S."/>
            <person name="Pollard J."/>
            <person name="Puri V."/>
            <person name="Reese M.G."/>
            <person name="Reinert K."/>
            <person name="Remington K."/>
            <person name="Saunders R.D.C."/>
            <person name="Scheeler F."/>
            <person name="Shen H."/>
            <person name="Shue B.C."/>
            <person name="Siden-Kiamos I."/>
            <person name="Simpson M."/>
            <person name="Skupski M.P."/>
            <person name="Smith T.J."/>
            <person name="Spier E."/>
            <person name="Spradling A.C."/>
            <person name="Stapleton M."/>
            <person name="Strong R."/>
            <person name="Sun E."/>
            <person name="Svirskas R."/>
            <person name="Tector C."/>
            <person name="Turner R."/>
            <person name="Venter E."/>
            <person name="Wang A.H."/>
            <person name="Wang X."/>
            <person name="Wang Z.-Y."/>
            <person name="Wassarman D.A."/>
            <person name="Weinstock G.M."/>
            <person name="Weissenbach J."/>
            <person name="Williams S.M."/>
            <person name="Woodage T."/>
            <person name="Worley K.C."/>
            <person name="Wu D."/>
            <person name="Yang S."/>
            <person name="Yao Q.A."/>
            <person name="Ye J."/>
            <person name="Yeh R.-F."/>
            <person name="Zaveri J.S."/>
            <person name="Zhan M."/>
            <person name="Zhang G."/>
            <person name="Zhao Q."/>
            <person name="Zheng L."/>
            <person name="Zheng X.H."/>
            <person name="Zhong F.N."/>
            <person name="Zhong W."/>
            <person name="Zhou X."/>
            <person name="Zhu S.C."/>
            <person name="Zhu X."/>
            <person name="Smith H.O."/>
            <person name="Gibbs R.A."/>
            <person name="Myers E.W."/>
            <person name="Rubin G.M."/>
            <person name="Venter J.C."/>
        </authorList>
    </citation>
    <scope>NUCLEOTIDE SEQUENCE [LARGE SCALE GENOMIC DNA]</scope>
    <source>
        <strain>Berkeley</strain>
    </source>
</reference>
<reference key="3">
    <citation type="journal article" date="2002" name="Genome Biol.">
        <title>Annotation of the Drosophila melanogaster euchromatic genome: a systematic review.</title>
        <authorList>
            <person name="Misra S."/>
            <person name="Crosby M.A."/>
            <person name="Mungall C.J."/>
            <person name="Matthews B.B."/>
            <person name="Campbell K.S."/>
            <person name="Hradecky P."/>
            <person name="Huang Y."/>
            <person name="Kaminker J.S."/>
            <person name="Millburn G.H."/>
            <person name="Prochnik S.E."/>
            <person name="Smith C.D."/>
            <person name="Tupy J.L."/>
            <person name="Whitfield E.J."/>
            <person name="Bayraktaroglu L."/>
            <person name="Berman B.P."/>
            <person name="Bettencourt B.R."/>
            <person name="Celniker S.E."/>
            <person name="de Grey A.D.N.J."/>
            <person name="Drysdale R.A."/>
            <person name="Harris N.L."/>
            <person name="Richter J."/>
            <person name="Russo S."/>
            <person name="Schroeder A.J."/>
            <person name="Shu S.Q."/>
            <person name="Stapleton M."/>
            <person name="Yamada C."/>
            <person name="Ashburner M."/>
            <person name="Gelbart W.M."/>
            <person name="Rubin G.M."/>
            <person name="Lewis S.E."/>
        </authorList>
    </citation>
    <scope>GENOME REANNOTATION</scope>
    <scope>ALTERNATIVE SPLICING</scope>
    <source>
        <strain>Berkeley</strain>
    </source>
</reference>
<reference key="4">
    <citation type="journal article" date="2002" name="Genome Biol.">
        <title>A Drosophila full-length cDNA resource.</title>
        <authorList>
            <person name="Stapleton M."/>
            <person name="Carlson J.W."/>
            <person name="Brokstein P."/>
            <person name="Yu C."/>
            <person name="Champe M."/>
            <person name="George R.A."/>
            <person name="Guarin H."/>
            <person name="Kronmiller B."/>
            <person name="Pacleb J.M."/>
            <person name="Park S."/>
            <person name="Wan K.H."/>
            <person name="Rubin G.M."/>
            <person name="Celniker S.E."/>
        </authorList>
    </citation>
    <scope>NUCLEOTIDE SEQUENCE [LARGE SCALE MRNA] OF 1-509 (ISOFORMS A/D)</scope>
    <scope>RNA EDITING OF POSITION 365</scope>
    <source>
        <strain>Berkeley</strain>
        <tissue>Head</tissue>
    </source>
</reference>
<reference key="5">
    <citation type="submission" date="2009-09" db="EMBL/GenBank/DDBJ databases">
        <authorList>
            <person name="Carlson J.W."/>
            <person name="Booth B."/>
            <person name="Frise E."/>
            <person name="Park S."/>
            <person name="Wan K.H."/>
            <person name="Yu C."/>
            <person name="Celniker S.E."/>
        </authorList>
    </citation>
    <scope>NUCLEOTIDE SEQUENCE [LARGE SCALE MRNA] OF 26-881 (ISOFORM F)</scope>
    <scope>RNA EDITING OF POSITION 365</scope>
    <source>
        <strain>Berkeley</strain>
    </source>
</reference>
<reference key="6">
    <citation type="journal article" date="2006" name="RNA">
        <title>RNA editing in Drosophila melanogaster: new targets and functional consequences.</title>
        <authorList>
            <person name="Stapleton M."/>
            <person name="Carlson J.W."/>
            <person name="Celniker S.E."/>
        </authorList>
    </citation>
    <scope>RNA EDITING OF POSITION 365</scope>
</reference>
<comment type="function">
    <text evidence="3">May function in the removal and maintenance of calcium homeostasis during signaling in the adult and in signaling events during embryogenesis and patterning of imaginal disks. Transports one Ca(2+) and 1 K(+) in exchange for 4 Na(+).</text>
</comment>
<comment type="subcellular location">
    <subcellularLocation>
        <location>Membrane</location>
        <topology>Multi-pass membrane protein</topology>
    </subcellularLocation>
</comment>
<comment type="alternative products">
    <event type="alternative splicing"/>
    <isoform>
        <id>Q9U6A0-1</id>
        <name>D</name>
        <sequence type="displayed"/>
    </isoform>
    <isoform>
        <id>Q9U6A0-2</id>
        <name>A</name>
        <name>B</name>
        <sequence type="described" ref="VSP_023345"/>
    </isoform>
    <isoform>
        <id>Q9U6A0-3</id>
        <name>E</name>
        <sequence type="described" ref="VSP_043929 VSP_043930"/>
    </isoform>
    <isoform>
        <id>Q9U6A0-4</id>
        <name>F</name>
        <sequence type="described" ref="VSP_043929 VSP_043930 VSP_023345"/>
    </isoform>
</comment>
<comment type="tissue specificity">
    <text evidence="3">Expressed in the adult nervous system. Expressed in the photoreceptor cells as well as in the lamina, medulla, and optic lobes of the brain.</text>
</comment>
<comment type="developmental stage">
    <text evidence="3">Expressed during ventral nerve cord development in the embryo and in larval imaginal disks. Expressed in a dorsal-ventral pattern in the eye-antennal disk.</text>
</comment>
<comment type="RNA editing">
    <location>
        <position position="365" evidence="3 4 5 6"/>
    </location>
    <text>Partially edited. Target of Adar.</text>
</comment>
<comment type="similarity">
    <text evidence="9">Belongs to the Ca(2+):cation antiporter (CaCA) (TC 2.A.19) family. SLC24A subfamily.</text>
</comment>
<comment type="sequence caution" evidence="9">
    <conflict type="miscellaneous discrepancy">
        <sequence resource="EMBL-CDS" id="AAM11027"/>
    </conflict>
    <text>Contaminating sequence. Potential poly-A sequence.</text>
</comment>
<name>NCKX_DROME</name>
<protein>
    <recommendedName>
        <fullName>Sodium/potassium/calcium exchanger Nckx30C</fullName>
    </recommendedName>
    <alternativeName>
        <fullName>Na(+)/K(+)/Ca(2+)-exchange protein Nckx30C</fullName>
    </alternativeName>
</protein>
<proteinExistence type="evidence at transcript level"/>
<gene>
    <name type="primary">Nckx30C</name>
    <name type="ORF">CG18660</name>
</gene>
<accession>Q9U6A0</accession>
<accession>A4V0I2</accession>
<accession>C7LAF4</accession>
<accession>Q8IPE3</accession>
<accession>Q8SXD2</accession>
<accession>Q9VL95</accession>
<evidence type="ECO:0000255" key="1"/>
<evidence type="ECO:0000256" key="2">
    <source>
        <dbReference type="SAM" id="MobiDB-lite"/>
    </source>
</evidence>
<evidence type="ECO:0000269" key="3">
    <source>
    </source>
</evidence>
<evidence type="ECO:0000269" key="4">
    <source>
    </source>
</evidence>
<evidence type="ECO:0000269" key="5">
    <source>
    </source>
</evidence>
<evidence type="ECO:0000269" key="6">
    <source ref="5"/>
</evidence>
<evidence type="ECO:0000303" key="7">
    <source>
    </source>
</evidence>
<evidence type="ECO:0000303" key="8">
    <source ref="5"/>
</evidence>
<evidence type="ECO:0000305" key="9"/>
<keyword id="KW-0025">Alternative splicing</keyword>
<keyword id="KW-0050">Antiport</keyword>
<keyword id="KW-0106">Calcium</keyword>
<keyword id="KW-0109">Calcium transport</keyword>
<keyword id="KW-0325">Glycoprotein</keyword>
<keyword id="KW-0406">Ion transport</keyword>
<keyword id="KW-0472">Membrane</keyword>
<keyword id="KW-0630">Potassium</keyword>
<keyword id="KW-0633">Potassium transport</keyword>
<keyword id="KW-1185">Reference proteome</keyword>
<keyword id="KW-0677">Repeat</keyword>
<keyword id="KW-0691">RNA editing</keyword>
<keyword id="KW-0915">Sodium</keyword>
<keyword id="KW-0739">Sodium transport</keyword>
<keyword id="KW-0769">Symport</keyword>
<keyword id="KW-0812">Transmembrane</keyword>
<keyword id="KW-1133">Transmembrane helix</keyword>
<keyword id="KW-0813">Transport</keyword>
<sequence length="881" mass="95129">MLQPTTCSKQQQQRQQPAIATAAVGGAAVQELLRKAAAKDHGALAAATATATAASTTATTATAATASRNSSNTWCHSDDMLSAGRSRSSSTTIDFNSRRRRGRLRGHAPSDLAMNKQHQATILDECVNIFKRLVLLTLKTISATTITKAKTRSRTAAQLPATSAASATSSRGASAEQLLHPSSRSRCRSRRCLRLPIYSILLLCLTTQGLGLGDAAKPRPAKQHFGGSNSNSPNQNQNHNDVLGGVGAPSQTSGEDEAEIMYPFQSGEQMFGLEEDQEQDPELNSNAVPGSDEDNAGNQRGINDTHNDNSTTTKTPLFPKDLFTKEQLENGAVILHIIGVIYMFVALAIVCDEFFVPSLDVIIEKLGITDDVAGATFMAAGGSAPELFTSVIGVFVSFDDVGIGTIVGSAVFNILFVIGMCALFSKTVLSLTWWPLFRDCSFYSISLLVLIYFFRDNRIFWWEALILFTIYIGYVAFMKWNVQVETCVKKMITKNKVTRVRSTDQLMPAGNAANSSETSMATQPGGSVTSRAASETRSGPPGSSNAGATGNSSGGGGTSGSTQTGAKFRHGLLQLMIHTIDPLHDGKVDEKATQLHAIASLKVLLDATKPQRGGATTSAANHVKINLKETTLADRPNGNIDTTLDSPSLSGRRPSWIEQRVKIQTRKFSIKAPEIEDEPEPLSMAWPDTARKRLTYVLVAPLLVPMWLTLPDTRTPRGKRFFPVTFIGSIVWIAAFSYLMVWWANVAGDTARIPPEVMGLTFLAAGTSIPDLITSVIVARKGFGDMAVSSSVGSNIFDVTVGLPIPWLLYGIIYGAPVEVNSVGMVCSITILFMMLVFVVMSIACFRWRMNKGLGFTMFLLYFAFVAVSLMFEYDVITCPF</sequence>
<dbReference type="EMBL" id="AF190455">
    <property type="protein sequence ID" value="AAF07938.1"/>
    <property type="molecule type" value="mRNA"/>
</dbReference>
<dbReference type="EMBL" id="AE014134">
    <property type="protein sequence ID" value="AAF52801.1"/>
    <property type="molecule type" value="Genomic_DNA"/>
</dbReference>
<dbReference type="EMBL" id="AE014134">
    <property type="protein sequence ID" value="AAN10706.1"/>
    <property type="molecule type" value="Genomic_DNA"/>
</dbReference>
<dbReference type="EMBL" id="AY094674">
    <property type="protein sequence ID" value="AAM11027.1"/>
    <property type="status" value="ALT_SEQ"/>
    <property type="molecule type" value="mRNA"/>
</dbReference>
<dbReference type="EMBL" id="BT099704">
    <property type="protein sequence ID" value="ACV53068.1"/>
    <property type="molecule type" value="mRNA"/>
</dbReference>
<dbReference type="RefSeq" id="NP_001188761.1">
    <molecule id="Q9U6A0-3"/>
    <property type="nucleotide sequence ID" value="NM_001201832.2"/>
</dbReference>
<dbReference type="RefSeq" id="NP_001260296.1">
    <molecule id="Q9U6A0-4"/>
    <property type="nucleotide sequence ID" value="NM_001273367.1"/>
</dbReference>
<dbReference type="RefSeq" id="NP_652011.3">
    <molecule id="Q9U6A0-1"/>
    <property type="nucleotide sequence ID" value="NM_143754.5"/>
</dbReference>
<dbReference type="RefSeq" id="NP_723482.1">
    <molecule id="Q9U6A0-2"/>
    <property type="nucleotide sequence ID" value="NM_164869.3"/>
</dbReference>
<dbReference type="RefSeq" id="NP_723483.1">
    <molecule id="Q9U6A0-2"/>
    <property type="nucleotide sequence ID" value="NM_164870.3"/>
</dbReference>
<dbReference type="FunCoup" id="Q9U6A0">
    <property type="interactions" value="206"/>
</dbReference>
<dbReference type="STRING" id="7227.FBpp0292911"/>
<dbReference type="GlyCosmos" id="Q9U6A0">
    <property type="glycosylation" value="3 sites, No reported glycans"/>
</dbReference>
<dbReference type="GlyGen" id="Q9U6A0">
    <property type="glycosylation" value="3 sites"/>
</dbReference>
<dbReference type="PaxDb" id="7227-FBpp0292911"/>
<dbReference type="EnsemblMetazoa" id="FBtr0079926">
    <molecule id="Q9U6A0-2"/>
    <property type="protein sequence ID" value="FBpp0079516"/>
    <property type="gene ID" value="FBgn0028704"/>
</dbReference>
<dbReference type="EnsemblMetazoa" id="FBtr0079928">
    <molecule id="Q9U6A0-2"/>
    <property type="protein sequence ID" value="FBpp0079518"/>
    <property type="gene ID" value="FBgn0028704"/>
</dbReference>
<dbReference type="EnsemblMetazoa" id="FBtr0303908">
    <molecule id="Q9U6A0-1"/>
    <property type="protein sequence ID" value="FBpp0292911"/>
    <property type="gene ID" value="FBgn0028704"/>
</dbReference>
<dbReference type="EnsemblMetazoa" id="FBtr0303909">
    <molecule id="Q9U6A0-3"/>
    <property type="protein sequence ID" value="FBpp0292912"/>
    <property type="gene ID" value="FBgn0028704"/>
</dbReference>
<dbReference type="EnsemblMetazoa" id="FBtr0335506">
    <molecule id="Q9U6A0-4"/>
    <property type="protein sequence ID" value="FBpp0307474"/>
    <property type="gene ID" value="FBgn0028704"/>
</dbReference>
<dbReference type="GeneID" id="45248"/>
<dbReference type="KEGG" id="dme:Dmel_CG18660"/>
<dbReference type="UCSC" id="CG18660-RB">
    <property type="organism name" value="d. melanogaster"/>
</dbReference>
<dbReference type="AGR" id="FB:FBgn0028704"/>
<dbReference type="CTD" id="45248"/>
<dbReference type="FlyBase" id="FBgn0028704">
    <property type="gene designation" value="Nckx30C"/>
</dbReference>
<dbReference type="VEuPathDB" id="VectorBase:FBgn0028704"/>
<dbReference type="eggNOG" id="KOG1307">
    <property type="taxonomic scope" value="Eukaryota"/>
</dbReference>
<dbReference type="GeneTree" id="ENSGT01030000234532"/>
<dbReference type="InParanoid" id="Q9U6A0"/>
<dbReference type="OMA" id="NGIMQLM"/>
<dbReference type="OrthoDB" id="2127281at2759"/>
<dbReference type="PhylomeDB" id="Q9U6A0"/>
<dbReference type="Reactome" id="R-DME-425561">
    <property type="pathway name" value="Sodium/Calcium exchangers"/>
</dbReference>
<dbReference type="BioGRID-ORCS" id="45248">
    <property type="hits" value="0 hits in 3 CRISPR screens"/>
</dbReference>
<dbReference type="ChiTaRS" id="Nckx30C">
    <property type="organism name" value="fly"/>
</dbReference>
<dbReference type="GenomeRNAi" id="45248"/>
<dbReference type="PRO" id="PR:Q9U6A0"/>
<dbReference type="Proteomes" id="UP000000803">
    <property type="component" value="Chromosome 2L"/>
</dbReference>
<dbReference type="Bgee" id="FBgn0028704">
    <property type="expression patterns" value="Expressed in distal medullary amacrine neuron Dm1-5 (Drosophila) in insect head and 197 other cell types or tissues"/>
</dbReference>
<dbReference type="ExpressionAtlas" id="Q9U6A0">
    <property type="expression patterns" value="baseline and differential"/>
</dbReference>
<dbReference type="GO" id="GO:0016020">
    <property type="term" value="C:membrane"/>
    <property type="evidence" value="ECO:0000314"/>
    <property type="project" value="UniProtKB"/>
</dbReference>
<dbReference type="GO" id="GO:0005886">
    <property type="term" value="C:plasma membrane"/>
    <property type="evidence" value="ECO:0000318"/>
    <property type="project" value="GO_Central"/>
</dbReference>
<dbReference type="GO" id="GO:0005262">
    <property type="term" value="F:calcium channel activity"/>
    <property type="evidence" value="ECO:0000318"/>
    <property type="project" value="GO_Central"/>
</dbReference>
<dbReference type="GO" id="GO:0008273">
    <property type="term" value="F:calcium, potassium:sodium antiporter activity"/>
    <property type="evidence" value="ECO:0000314"/>
    <property type="project" value="UniProtKB"/>
</dbReference>
<dbReference type="GO" id="GO:0015293">
    <property type="term" value="F:symporter activity"/>
    <property type="evidence" value="ECO:0007669"/>
    <property type="project" value="UniProtKB-KW"/>
</dbReference>
<dbReference type="GO" id="GO:0070588">
    <property type="term" value="P:calcium ion transmembrane transport"/>
    <property type="evidence" value="ECO:0000314"/>
    <property type="project" value="FlyBase"/>
</dbReference>
<dbReference type="GO" id="GO:0006816">
    <property type="term" value="P:calcium ion transport"/>
    <property type="evidence" value="ECO:0000314"/>
    <property type="project" value="FlyBase"/>
</dbReference>
<dbReference type="GO" id="GO:0048749">
    <property type="term" value="P:compound eye development"/>
    <property type="evidence" value="ECO:0000270"/>
    <property type="project" value="FlyBase"/>
</dbReference>
<dbReference type="GO" id="GO:0006874">
    <property type="term" value="P:intracellular calcium ion homeostasis"/>
    <property type="evidence" value="ECO:0000318"/>
    <property type="project" value="GO_Central"/>
</dbReference>
<dbReference type="GO" id="GO:0006814">
    <property type="term" value="P:sodium ion transport"/>
    <property type="evidence" value="ECO:0000315"/>
    <property type="project" value="UniProtKB"/>
</dbReference>
<dbReference type="FunFam" id="1.20.1420.30:FF:000002">
    <property type="entry name" value="Sodium/potassium/calcium exchanger 2 isoform 1"/>
    <property type="match status" value="1"/>
</dbReference>
<dbReference type="FunFam" id="1.20.1420.30:FF:000004">
    <property type="entry name" value="Sodium/potassium/calcium exchanger 2 isoform 1"/>
    <property type="match status" value="1"/>
</dbReference>
<dbReference type="Gene3D" id="1.20.1420.30">
    <property type="entry name" value="NCX, central ion-binding region"/>
    <property type="match status" value="2"/>
</dbReference>
<dbReference type="InterPro" id="IPR004481">
    <property type="entry name" value="K/Na/Ca-exchanger"/>
</dbReference>
<dbReference type="InterPro" id="IPR004837">
    <property type="entry name" value="NaCa_Exmemb"/>
</dbReference>
<dbReference type="InterPro" id="IPR044880">
    <property type="entry name" value="NCX_ion-bd_dom_sf"/>
</dbReference>
<dbReference type="NCBIfam" id="TIGR00367">
    <property type="entry name" value="calcium/sodium antiporter"/>
    <property type="match status" value="1"/>
</dbReference>
<dbReference type="PANTHER" id="PTHR10846">
    <property type="entry name" value="SODIUM/POTASSIUM/CALCIUM EXCHANGER"/>
    <property type="match status" value="1"/>
</dbReference>
<dbReference type="PANTHER" id="PTHR10846:SF72">
    <property type="entry name" value="SODIUM_POTASSIUM_CALCIUM EXCHANGER NCKX30C"/>
    <property type="match status" value="1"/>
</dbReference>
<dbReference type="Pfam" id="PF01699">
    <property type="entry name" value="Na_Ca_ex"/>
    <property type="match status" value="2"/>
</dbReference>
<feature type="chain" id="PRO_0000209496" description="Sodium/potassium/calcium exchanger Nckx30C">
    <location>
        <begin position="1"/>
        <end position="881"/>
    </location>
</feature>
<feature type="topological domain" description="Extracellular" evidence="1">
    <location>
        <begin position="1"/>
        <end position="194"/>
    </location>
</feature>
<feature type="transmembrane region" description="Helical; Name=1" evidence="1">
    <location>
        <begin position="195"/>
        <end position="215"/>
    </location>
</feature>
<feature type="topological domain" description="Cytoplasmic" evidence="1">
    <location>
        <begin position="216"/>
        <end position="330"/>
    </location>
</feature>
<feature type="transmembrane region" description="Helical; Name=2" evidence="1">
    <location>
        <begin position="331"/>
        <end position="351"/>
    </location>
</feature>
<feature type="topological domain" description="Extracellular" evidence="1">
    <location>
        <begin position="352"/>
        <end position="375"/>
    </location>
</feature>
<feature type="transmembrane region" description="Helical; Name=3" evidence="1">
    <location>
        <begin position="376"/>
        <end position="396"/>
    </location>
</feature>
<feature type="topological domain" description="Cytoplasmic" evidence="1">
    <location>
        <begin position="397"/>
        <end position="402"/>
    </location>
</feature>
<feature type="transmembrane region" description="Helical; Name=4" evidence="1">
    <location>
        <begin position="403"/>
        <end position="423"/>
    </location>
</feature>
<feature type="topological domain" description="Extracellular" evidence="1">
    <location>
        <begin position="424"/>
        <end position="433"/>
    </location>
</feature>
<feature type="transmembrane region" description="Helical; Name=5" evidence="1">
    <location>
        <begin position="434"/>
        <end position="454"/>
    </location>
</feature>
<feature type="topological domain" description="Cytoplasmic" evidence="1">
    <location>
        <begin position="455"/>
        <end position="458"/>
    </location>
</feature>
<feature type="transmembrane region" description="Helical; Name=6" evidence="1">
    <location>
        <begin position="459"/>
        <end position="479"/>
    </location>
</feature>
<feature type="topological domain" description="Extracellular" evidence="1">
    <location>
        <begin position="480"/>
        <end position="720"/>
    </location>
</feature>
<feature type="transmembrane region" description="Helical; Name=7" evidence="1">
    <location>
        <begin position="721"/>
        <end position="741"/>
    </location>
</feature>
<feature type="topological domain" description="Cytoplasmic" evidence="1">
    <location>
        <begin position="742"/>
        <end position="756"/>
    </location>
</feature>
<feature type="transmembrane region" description="Helical; Name=8" evidence="1">
    <location>
        <begin position="757"/>
        <end position="777"/>
    </location>
</feature>
<feature type="topological domain" description="Extracellular" evidence="1">
    <location>
        <begin position="778"/>
        <end position="795"/>
    </location>
</feature>
<feature type="transmembrane region" description="Helical; Name=9" evidence="1">
    <location>
        <begin position="796"/>
        <end position="816"/>
    </location>
</feature>
<feature type="topological domain" description="Cytoplasmic" evidence="1">
    <location>
        <begin position="817"/>
        <end position="822"/>
    </location>
</feature>
<feature type="transmembrane region" description="Helical; Name=10" evidence="1">
    <location>
        <begin position="823"/>
        <end position="843"/>
    </location>
</feature>
<feature type="topological domain" description="Extracellular" evidence="1">
    <location>
        <begin position="844"/>
        <end position="852"/>
    </location>
</feature>
<feature type="transmembrane region" description="Helical; Name=11" evidence="1">
    <location>
        <begin position="853"/>
        <end position="873"/>
    </location>
</feature>
<feature type="topological domain" description="Cytoplasmic" evidence="1">
    <location>
        <begin position="874"/>
        <end position="881"/>
    </location>
</feature>
<feature type="repeat" description="Alpha-1">
    <location>
        <begin position="372"/>
        <end position="412"/>
    </location>
</feature>
<feature type="repeat" description="Alpha-2">
    <location>
        <begin position="764"/>
        <end position="795"/>
    </location>
</feature>
<feature type="region of interest" description="Disordered" evidence="2">
    <location>
        <begin position="79"/>
        <end position="111"/>
    </location>
</feature>
<feature type="region of interest" description="Disordered" evidence="2">
    <location>
        <begin position="149"/>
        <end position="181"/>
    </location>
</feature>
<feature type="region of interest" description="Disordered" evidence="2">
    <location>
        <begin position="215"/>
        <end position="255"/>
    </location>
</feature>
<feature type="region of interest" description="Disordered" evidence="2">
    <location>
        <begin position="272"/>
        <end position="315"/>
    </location>
</feature>
<feature type="region of interest" description="Disordered" evidence="2">
    <location>
        <begin position="508"/>
        <end position="565"/>
    </location>
</feature>
<feature type="compositionally biased region" description="Polar residues" evidence="2">
    <location>
        <begin position="85"/>
        <end position="95"/>
    </location>
</feature>
<feature type="compositionally biased region" description="Low complexity" evidence="2">
    <location>
        <begin position="149"/>
        <end position="175"/>
    </location>
</feature>
<feature type="compositionally biased region" description="Low complexity" evidence="2">
    <location>
        <begin position="228"/>
        <end position="240"/>
    </location>
</feature>
<feature type="compositionally biased region" description="Polar residues" evidence="2">
    <location>
        <begin position="296"/>
        <end position="315"/>
    </location>
</feature>
<feature type="compositionally biased region" description="Polar residues" evidence="2">
    <location>
        <begin position="512"/>
        <end position="537"/>
    </location>
</feature>
<feature type="compositionally biased region" description="Low complexity" evidence="2">
    <location>
        <begin position="542"/>
        <end position="551"/>
    </location>
</feature>
<feature type="glycosylation site" description="N-linked (GlcNAc...) asparagine" evidence="1">
    <location>
        <position position="69"/>
    </location>
</feature>
<feature type="glycosylation site" description="N-linked (GlcNAc...) asparagine" evidence="1">
    <location>
        <position position="514"/>
    </location>
</feature>
<feature type="glycosylation site" description="N-linked (GlcNAc...) asparagine" evidence="1">
    <location>
        <position position="551"/>
    </location>
</feature>
<feature type="splice variant" id="VSP_043929" description="In isoform E and isoform F." evidence="8">
    <location>
        <begin position="497"/>
        <end position="509"/>
    </location>
</feature>
<feature type="splice variant" id="VSP_043930" description="In isoform E and isoform F." evidence="8">
    <original>D</original>
    <variation>DDDVP</variation>
    <location>
        <position position="585"/>
    </location>
</feature>
<feature type="splice variant" id="VSP_023345" description="In isoform A and isoform F." evidence="7 8">
    <location>
        <begin position="647"/>
        <end position="671"/>
    </location>
</feature>
<feature type="sequence variant" description="In RNA edited version.">
    <original>K</original>
    <variation>R</variation>
    <location>
        <position position="365"/>
    </location>
</feature>
<feature type="sequence conflict" description="In Ref. 1; AAF07938." evidence="9" ref="1">
    <original>S</original>
    <variation>F</variation>
    <location>
        <position position="110"/>
    </location>
</feature>
<feature type="sequence conflict" description="In Ref. 1; AAF07938 and 5; ACV53068." evidence="9" ref="1 5">
    <original>K</original>
    <variation>R</variation>
    <location>
        <position position="852"/>
    </location>
</feature>
<organism>
    <name type="scientific">Drosophila melanogaster</name>
    <name type="common">Fruit fly</name>
    <dbReference type="NCBI Taxonomy" id="7227"/>
    <lineage>
        <taxon>Eukaryota</taxon>
        <taxon>Metazoa</taxon>
        <taxon>Ecdysozoa</taxon>
        <taxon>Arthropoda</taxon>
        <taxon>Hexapoda</taxon>
        <taxon>Insecta</taxon>
        <taxon>Pterygota</taxon>
        <taxon>Neoptera</taxon>
        <taxon>Endopterygota</taxon>
        <taxon>Diptera</taxon>
        <taxon>Brachycera</taxon>
        <taxon>Muscomorpha</taxon>
        <taxon>Ephydroidea</taxon>
        <taxon>Drosophilidae</taxon>
        <taxon>Drosophila</taxon>
        <taxon>Sophophora</taxon>
    </lineage>
</organism>